<keyword id="KW-0004">4Fe-4S</keyword>
<keyword id="KW-0067">ATP-binding</keyword>
<keyword id="KW-0077">Bacteriochlorophyll biosynthesis</keyword>
<keyword id="KW-0149">Chlorophyll biosynthesis</keyword>
<keyword id="KW-0408">Iron</keyword>
<keyword id="KW-0411">Iron-sulfur</keyword>
<keyword id="KW-0479">Metal-binding</keyword>
<keyword id="KW-0547">Nucleotide-binding</keyword>
<keyword id="KW-0560">Oxidoreductase</keyword>
<keyword id="KW-0602">Photosynthesis</keyword>
<keyword id="KW-1185">Reference proteome</keyword>
<protein>
    <recommendedName>
        <fullName evidence="1">Light-independent protochlorophyllide reductase subunit B</fullName>
        <shortName evidence="1">DPOR subunit B</shortName>
        <shortName evidence="1">LI-POR subunit B</shortName>
        <ecNumber evidence="1">1.3.7.7</ecNumber>
    </recommendedName>
</protein>
<organism>
    <name type="scientific">Roseobacter denitrificans (strain ATCC 33942 / OCh 114)</name>
    <name type="common">Erythrobacter sp. (strain OCh 114)</name>
    <name type="synonym">Roseobacter denitrificans</name>
    <dbReference type="NCBI Taxonomy" id="375451"/>
    <lineage>
        <taxon>Bacteria</taxon>
        <taxon>Pseudomonadati</taxon>
        <taxon>Pseudomonadota</taxon>
        <taxon>Alphaproteobacteria</taxon>
        <taxon>Rhodobacterales</taxon>
        <taxon>Roseobacteraceae</taxon>
        <taxon>Roseobacter</taxon>
    </lineage>
</organism>
<name>BCHB_ROSDO</name>
<proteinExistence type="inferred from homology"/>
<gene>
    <name evidence="1" type="primary">bchB</name>
    <name type="ordered locus">RD1_0138</name>
</gene>
<comment type="function">
    <text evidence="1">Component of the dark-operative protochlorophyllide reductase (DPOR) that uses Mg-ATP and reduced ferredoxin to reduce ring D of protochlorophyllide (Pchlide) to form chlorophyllide a (Chlide). This reaction is light-independent. The NB-protein (BchN-BchB) is the catalytic component of the complex.</text>
</comment>
<comment type="catalytic activity">
    <reaction evidence="1">
        <text>chlorophyllide a + oxidized 2[4Fe-4S]-[ferredoxin] + 2 ADP + 2 phosphate = protochlorophyllide a + reduced 2[4Fe-4S]-[ferredoxin] + 2 ATP + 2 H2O</text>
        <dbReference type="Rhea" id="RHEA:28202"/>
        <dbReference type="Rhea" id="RHEA-COMP:10002"/>
        <dbReference type="Rhea" id="RHEA-COMP:10004"/>
        <dbReference type="ChEBI" id="CHEBI:15377"/>
        <dbReference type="ChEBI" id="CHEBI:30616"/>
        <dbReference type="ChEBI" id="CHEBI:33722"/>
        <dbReference type="ChEBI" id="CHEBI:33723"/>
        <dbReference type="ChEBI" id="CHEBI:43474"/>
        <dbReference type="ChEBI" id="CHEBI:83348"/>
        <dbReference type="ChEBI" id="CHEBI:83350"/>
        <dbReference type="ChEBI" id="CHEBI:456216"/>
        <dbReference type="EC" id="1.3.7.7"/>
    </reaction>
</comment>
<comment type="cofactor">
    <cofactor evidence="1">
        <name>[4Fe-4S] cluster</name>
        <dbReference type="ChEBI" id="CHEBI:49883"/>
    </cofactor>
    <text evidence="1">Binds 1 [4Fe-4S] cluster per heterodimer. The cluster is bound at the heterodimer interface by residues from both subunits.</text>
</comment>
<comment type="pathway">
    <text evidence="1">Porphyrin-containing compound metabolism; bacteriochlorophyll biosynthesis (light-independent).</text>
</comment>
<comment type="subunit">
    <text evidence="1">Protochlorophyllide reductase is composed of three subunits; BchL, BchN and BchB. Forms a heterotetramer of two BchB and two BchN subunits.</text>
</comment>
<comment type="similarity">
    <text evidence="1">Belongs to the ChlB/BchB/BchZ family.</text>
</comment>
<feature type="chain" id="PRO_1000048423" description="Light-independent protochlorophyllide reductase subunit B">
    <location>
        <begin position="1"/>
        <end position="513"/>
    </location>
</feature>
<feature type="region of interest" description="Disordered" evidence="2">
    <location>
        <begin position="426"/>
        <end position="457"/>
    </location>
</feature>
<feature type="compositionally biased region" description="Low complexity" evidence="2">
    <location>
        <begin position="440"/>
        <end position="454"/>
    </location>
</feature>
<feature type="active site" description="Proton donor" evidence="1">
    <location>
        <position position="274"/>
    </location>
</feature>
<feature type="binding site" evidence="1">
    <location>
        <position position="36"/>
    </location>
    <ligand>
        <name>[4Fe-4S] cluster</name>
        <dbReference type="ChEBI" id="CHEBI:49883"/>
        <note>ligand shared with heterodimeric partner</note>
    </ligand>
</feature>
<feature type="binding site" evidence="1">
    <location>
        <begin position="409"/>
        <end position="410"/>
    </location>
    <ligand>
        <name>substrate</name>
    </ligand>
</feature>
<accession>Q16DS0</accession>
<evidence type="ECO:0000255" key="1">
    <source>
        <dbReference type="HAMAP-Rule" id="MF_00353"/>
    </source>
</evidence>
<evidence type="ECO:0000256" key="2">
    <source>
        <dbReference type="SAM" id="MobiDB-lite"/>
    </source>
</evidence>
<sequence length="513" mass="56849">MKLTVWTYEGPPHVGAMRVATGMKGLHYVLHAPQGDTYADLLFTMIERRDHRPPVTYTTFQARDLGSDTADLFKQTLQDAYDRFQPEALIVGASCTAELIQDDPGGMSETMGIPIPVIPLELPSYQRKENFGADETFFQIVRTLAKPMARTKQITCNLIGPTALGFRHRDDITELTGLLSDMGISVNVVAPMDATPTDIARIGAAHFNVLMYPETAETAARWMERELGQPYTKTVPIGVGATRDFIAEVAQIAGVAPYLDDSRLRLPWYSRSVDSTYLTGKRVFLFGDGTHVIAAARIARDEMGFEVVGLGCYNREMARPVRALARDFGIEALITDDYLEVESRIEALQPEMILGTQMERHIGKRLGIPCAVISAPVHVQDFPARYSPQMGVEGANVIFDTWVHPLVMGLEEHLLHMFRDDFEFHDAAGPSHHGGHSPKPQAAEPAPQAAPQPENTGTSVEVVWLADAERELKKIPFFVRGKARRNTETFASERGVGEISVDTLYEAKAHYAR</sequence>
<dbReference type="EC" id="1.3.7.7" evidence="1"/>
<dbReference type="EMBL" id="CP000362">
    <property type="protein sequence ID" value="ABG29873.1"/>
    <property type="molecule type" value="Genomic_DNA"/>
</dbReference>
<dbReference type="RefSeq" id="WP_011566495.1">
    <property type="nucleotide sequence ID" value="NC_008209.1"/>
</dbReference>
<dbReference type="SMR" id="Q16DS0"/>
<dbReference type="STRING" id="375451.RD1_0138"/>
<dbReference type="KEGG" id="rde:RD1_0138"/>
<dbReference type="eggNOG" id="COG2710">
    <property type="taxonomic scope" value="Bacteria"/>
</dbReference>
<dbReference type="HOGENOM" id="CLU_025470_0_0_5"/>
<dbReference type="OrthoDB" id="5717231at2"/>
<dbReference type="UniPathway" id="UPA00671"/>
<dbReference type="Proteomes" id="UP000007029">
    <property type="component" value="Chromosome"/>
</dbReference>
<dbReference type="GO" id="GO:0051539">
    <property type="term" value="F:4 iron, 4 sulfur cluster binding"/>
    <property type="evidence" value="ECO:0007669"/>
    <property type="project" value="UniProtKB-UniRule"/>
</dbReference>
<dbReference type="GO" id="GO:0005524">
    <property type="term" value="F:ATP binding"/>
    <property type="evidence" value="ECO:0007669"/>
    <property type="project" value="UniProtKB-UniRule"/>
</dbReference>
<dbReference type="GO" id="GO:0046872">
    <property type="term" value="F:metal ion binding"/>
    <property type="evidence" value="ECO:0007669"/>
    <property type="project" value="UniProtKB-KW"/>
</dbReference>
<dbReference type="GO" id="GO:0016730">
    <property type="term" value="F:oxidoreductase activity, acting on iron-sulfur proteins as donors"/>
    <property type="evidence" value="ECO:0007669"/>
    <property type="project" value="InterPro"/>
</dbReference>
<dbReference type="GO" id="GO:0016636">
    <property type="term" value="F:oxidoreductase activity, acting on the CH-CH group of donors, iron-sulfur protein as acceptor"/>
    <property type="evidence" value="ECO:0007669"/>
    <property type="project" value="UniProtKB-UniRule"/>
</dbReference>
<dbReference type="GO" id="GO:0036070">
    <property type="term" value="P:light-independent bacteriochlorophyll biosynthetic process"/>
    <property type="evidence" value="ECO:0007669"/>
    <property type="project" value="UniProtKB-UniRule"/>
</dbReference>
<dbReference type="GO" id="GO:0019685">
    <property type="term" value="P:photosynthesis, dark reaction"/>
    <property type="evidence" value="ECO:0007669"/>
    <property type="project" value="InterPro"/>
</dbReference>
<dbReference type="Gene3D" id="1.20.89.20">
    <property type="match status" value="1"/>
</dbReference>
<dbReference type="Gene3D" id="3.40.50.1980">
    <property type="entry name" value="Nitrogenase molybdenum iron protein domain"/>
    <property type="match status" value="3"/>
</dbReference>
<dbReference type="Gene3D" id="1.10.8.550">
    <property type="entry name" value="Proto-chlorophyllide reductase 57 kD subunit B"/>
    <property type="match status" value="1"/>
</dbReference>
<dbReference type="HAMAP" id="MF_00353">
    <property type="entry name" value="ChlB_BchB"/>
    <property type="match status" value="1"/>
</dbReference>
<dbReference type="InterPro" id="IPR050152">
    <property type="entry name" value="ChlB/BchB/BchZ"/>
</dbReference>
<dbReference type="InterPro" id="IPR013580">
    <property type="entry name" value="LI-POR_suB-like_C"/>
</dbReference>
<dbReference type="InterPro" id="IPR000510">
    <property type="entry name" value="Nase/OxRdtase_comp1"/>
</dbReference>
<dbReference type="InterPro" id="IPR042298">
    <property type="entry name" value="P-CP_red_C"/>
</dbReference>
<dbReference type="InterPro" id="IPR005969">
    <property type="entry name" value="Protochl_reductB"/>
</dbReference>
<dbReference type="InterPro" id="IPR016209">
    <property type="entry name" value="Protochlorophyllide_Rdtase"/>
</dbReference>
<dbReference type="NCBIfam" id="TIGR01278">
    <property type="entry name" value="DPOR_BchB"/>
    <property type="match status" value="1"/>
</dbReference>
<dbReference type="PANTHER" id="PTHR33712">
    <property type="entry name" value="LIGHT-INDEPENDENT PROTOCHLOROPHYLLIDE REDUCTASE SUBUNIT B"/>
    <property type="match status" value="1"/>
</dbReference>
<dbReference type="PANTHER" id="PTHR33712:SF7">
    <property type="entry name" value="LIGHT-INDEPENDENT PROTOCHLOROPHYLLIDE REDUCTASE SUBUNIT B"/>
    <property type="match status" value="1"/>
</dbReference>
<dbReference type="Pfam" id="PF00148">
    <property type="entry name" value="Oxidored_nitro"/>
    <property type="match status" value="1"/>
</dbReference>
<dbReference type="Pfam" id="PF08369">
    <property type="entry name" value="PCP_red"/>
    <property type="match status" value="1"/>
</dbReference>
<dbReference type="PIRSF" id="PIRSF000163">
    <property type="entry name" value="PCP_ChlB"/>
    <property type="match status" value="1"/>
</dbReference>
<dbReference type="SUPFAM" id="SSF53807">
    <property type="entry name" value="Helical backbone' metal receptor"/>
    <property type="match status" value="1"/>
</dbReference>
<reference key="1">
    <citation type="journal article" date="2007" name="J. Bacteriol.">
        <title>The complete genome sequence of Roseobacter denitrificans reveals a mixotrophic rather than photosynthetic metabolism.</title>
        <authorList>
            <person name="Swingley W.D."/>
            <person name="Sadekar S."/>
            <person name="Mastrian S.D."/>
            <person name="Matthies H.J."/>
            <person name="Hao J."/>
            <person name="Ramos H."/>
            <person name="Acharya C.R."/>
            <person name="Conrad A.L."/>
            <person name="Taylor H.L."/>
            <person name="Dejesa L.C."/>
            <person name="Shah M.K."/>
            <person name="O'Huallachain M.E."/>
            <person name="Lince M.T."/>
            <person name="Blankenship R.E."/>
            <person name="Beatty J.T."/>
            <person name="Touchman J.W."/>
        </authorList>
    </citation>
    <scope>NUCLEOTIDE SEQUENCE [LARGE SCALE GENOMIC DNA]</scope>
    <source>
        <strain>ATCC 33942 / OCh 114</strain>
    </source>
</reference>